<organism>
    <name type="scientific">Paramagnetospirillum magneticum (strain ATCC 700264 / AMB-1)</name>
    <name type="common">Magnetospirillum magneticum</name>
    <dbReference type="NCBI Taxonomy" id="342108"/>
    <lineage>
        <taxon>Bacteria</taxon>
        <taxon>Pseudomonadati</taxon>
        <taxon>Pseudomonadota</taxon>
        <taxon>Alphaproteobacteria</taxon>
        <taxon>Rhodospirillales</taxon>
        <taxon>Magnetospirillaceae</taxon>
        <taxon>Paramagnetospirillum</taxon>
    </lineage>
</organism>
<name>NRDR3_PARM1</name>
<evidence type="ECO:0000255" key="1">
    <source>
        <dbReference type="HAMAP-Rule" id="MF_00440"/>
    </source>
</evidence>
<evidence type="ECO:0000256" key="2">
    <source>
        <dbReference type="SAM" id="MobiDB-lite"/>
    </source>
</evidence>
<sequence length="153" mass="17910">MRCPFCGHDDTQVKDSRPTEDNSAIRRRRSCPECGSRFTTFERVQIRDLVVIKKDGGRSPFDRDKVLKSLRIALRKRPVDDEQIERIVNGIHRRLESMGENEVPSKFIGELVMEVLMDLDKVAYVRYASVYRNFREAKDFEDFLGKMVVPRLD</sequence>
<accession>Q2W4T1</accession>
<reference key="1">
    <citation type="journal article" date="2005" name="DNA Res.">
        <title>Complete genome sequence of the facultative anaerobic magnetotactic bacterium Magnetospirillum sp. strain AMB-1.</title>
        <authorList>
            <person name="Matsunaga T."/>
            <person name="Okamura Y."/>
            <person name="Fukuda Y."/>
            <person name="Wahyudi A.T."/>
            <person name="Murase Y."/>
            <person name="Takeyama H."/>
        </authorList>
    </citation>
    <scope>NUCLEOTIDE SEQUENCE [LARGE SCALE GENOMIC DNA]</scope>
    <source>
        <strain>ATCC 700264 / AMB-1</strain>
    </source>
</reference>
<gene>
    <name evidence="1" type="primary">nrdR3</name>
    <name type="ordered locus">amb2340</name>
</gene>
<protein>
    <recommendedName>
        <fullName evidence="1">Transcriptional repressor NrdR 3</fullName>
    </recommendedName>
</protein>
<feature type="chain" id="PRO_0000249026" description="Transcriptional repressor NrdR 3">
    <location>
        <begin position="1"/>
        <end position="153"/>
    </location>
</feature>
<feature type="domain" description="ATP-cone" evidence="1">
    <location>
        <begin position="49"/>
        <end position="139"/>
    </location>
</feature>
<feature type="zinc finger region" evidence="1">
    <location>
        <begin position="3"/>
        <end position="34"/>
    </location>
</feature>
<feature type="region of interest" description="Disordered" evidence="2">
    <location>
        <begin position="1"/>
        <end position="26"/>
    </location>
</feature>
<feature type="compositionally biased region" description="Basic and acidic residues" evidence="2">
    <location>
        <begin position="7"/>
        <end position="24"/>
    </location>
</feature>
<comment type="function">
    <text evidence="1">Negatively regulates transcription of bacterial ribonucleotide reductase nrd genes and operons by binding to NrdR-boxes.</text>
</comment>
<comment type="cofactor">
    <cofactor evidence="1">
        <name>Zn(2+)</name>
        <dbReference type="ChEBI" id="CHEBI:29105"/>
    </cofactor>
    <text evidence="1">Binds 1 zinc ion.</text>
</comment>
<comment type="similarity">
    <text evidence="1">Belongs to the NrdR family.</text>
</comment>
<dbReference type="EMBL" id="AP007255">
    <property type="protein sequence ID" value="BAE51144.1"/>
    <property type="molecule type" value="Genomic_DNA"/>
</dbReference>
<dbReference type="SMR" id="Q2W4T1"/>
<dbReference type="STRING" id="342108.amb2340"/>
<dbReference type="KEGG" id="mag:amb2340"/>
<dbReference type="HOGENOM" id="CLU_108412_0_1_5"/>
<dbReference type="OrthoDB" id="9807461at2"/>
<dbReference type="Proteomes" id="UP000007058">
    <property type="component" value="Chromosome"/>
</dbReference>
<dbReference type="GO" id="GO:0005524">
    <property type="term" value="F:ATP binding"/>
    <property type="evidence" value="ECO:0007669"/>
    <property type="project" value="UniProtKB-KW"/>
</dbReference>
<dbReference type="GO" id="GO:0003677">
    <property type="term" value="F:DNA binding"/>
    <property type="evidence" value="ECO:0007669"/>
    <property type="project" value="UniProtKB-KW"/>
</dbReference>
<dbReference type="GO" id="GO:0008270">
    <property type="term" value="F:zinc ion binding"/>
    <property type="evidence" value="ECO:0007669"/>
    <property type="project" value="UniProtKB-UniRule"/>
</dbReference>
<dbReference type="GO" id="GO:0045892">
    <property type="term" value="P:negative regulation of DNA-templated transcription"/>
    <property type="evidence" value="ECO:0007669"/>
    <property type="project" value="UniProtKB-UniRule"/>
</dbReference>
<dbReference type="HAMAP" id="MF_00440">
    <property type="entry name" value="NrdR"/>
    <property type="match status" value="1"/>
</dbReference>
<dbReference type="InterPro" id="IPR005144">
    <property type="entry name" value="ATP-cone_dom"/>
</dbReference>
<dbReference type="InterPro" id="IPR055173">
    <property type="entry name" value="NrdR-like_N"/>
</dbReference>
<dbReference type="InterPro" id="IPR003796">
    <property type="entry name" value="RNR_NrdR-like"/>
</dbReference>
<dbReference type="NCBIfam" id="TIGR00244">
    <property type="entry name" value="transcriptional regulator NrdR"/>
    <property type="match status" value="1"/>
</dbReference>
<dbReference type="PANTHER" id="PTHR30455">
    <property type="entry name" value="TRANSCRIPTIONAL REPRESSOR NRDR"/>
    <property type="match status" value="1"/>
</dbReference>
<dbReference type="PANTHER" id="PTHR30455:SF2">
    <property type="entry name" value="TRANSCRIPTIONAL REPRESSOR NRDR"/>
    <property type="match status" value="1"/>
</dbReference>
<dbReference type="Pfam" id="PF03477">
    <property type="entry name" value="ATP-cone"/>
    <property type="match status" value="1"/>
</dbReference>
<dbReference type="Pfam" id="PF22811">
    <property type="entry name" value="Zn_ribbon_NrdR"/>
    <property type="match status" value="1"/>
</dbReference>
<dbReference type="PROSITE" id="PS51161">
    <property type="entry name" value="ATP_CONE"/>
    <property type="match status" value="1"/>
</dbReference>
<keyword id="KW-0067">ATP-binding</keyword>
<keyword id="KW-0238">DNA-binding</keyword>
<keyword id="KW-0479">Metal-binding</keyword>
<keyword id="KW-0547">Nucleotide-binding</keyword>
<keyword id="KW-0678">Repressor</keyword>
<keyword id="KW-0804">Transcription</keyword>
<keyword id="KW-0805">Transcription regulation</keyword>
<keyword id="KW-0862">Zinc</keyword>
<keyword id="KW-0863">Zinc-finger</keyword>
<proteinExistence type="inferred from homology"/>